<dbReference type="EC" id="2.7.7.87" evidence="2"/>
<dbReference type="EMBL" id="BC120307">
    <property type="protein sequence ID" value="AAI20308.1"/>
    <property type="molecule type" value="mRNA"/>
</dbReference>
<dbReference type="RefSeq" id="NP_001069018.1">
    <property type="nucleotide sequence ID" value="NM_001075550.1"/>
</dbReference>
<dbReference type="SMR" id="Q0VC80"/>
<dbReference type="FunCoup" id="Q0VC80">
    <property type="interactions" value="1947"/>
</dbReference>
<dbReference type="STRING" id="9913.ENSBTAP00000058047"/>
<dbReference type="PaxDb" id="9913-ENSBTAP00000008530"/>
<dbReference type="Ensembl" id="ENSBTAT00000008529.4">
    <property type="protein sequence ID" value="ENSBTAP00000008530.2"/>
    <property type="gene ID" value="ENSBTAG00000006510.4"/>
</dbReference>
<dbReference type="GeneID" id="512062"/>
<dbReference type="KEGG" id="bta:512062"/>
<dbReference type="CTD" id="79693"/>
<dbReference type="VEuPathDB" id="HostDB:ENSBTAG00000006510"/>
<dbReference type="VGNC" id="VGNC:37038">
    <property type="gene designation" value="YRDC"/>
</dbReference>
<dbReference type="eggNOG" id="KOG3051">
    <property type="taxonomic scope" value="Eukaryota"/>
</dbReference>
<dbReference type="GeneTree" id="ENSGT00390000015364"/>
<dbReference type="HOGENOM" id="CLU_031397_5_1_1"/>
<dbReference type="InParanoid" id="Q0VC80"/>
<dbReference type="OMA" id="YALGCQI"/>
<dbReference type="OrthoDB" id="3648309at2759"/>
<dbReference type="TreeFam" id="TF314358"/>
<dbReference type="Proteomes" id="UP000009136">
    <property type="component" value="Chromosome 3"/>
</dbReference>
<dbReference type="Bgee" id="ENSBTAG00000006510">
    <property type="expression patterns" value="Expressed in semen and 105 other cell types or tissues"/>
</dbReference>
<dbReference type="GO" id="GO:0005737">
    <property type="term" value="C:cytoplasm"/>
    <property type="evidence" value="ECO:0000250"/>
    <property type="project" value="UniProtKB"/>
</dbReference>
<dbReference type="GO" id="GO:0005739">
    <property type="term" value="C:mitochondrion"/>
    <property type="evidence" value="ECO:0000250"/>
    <property type="project" value="UniProtKB"/>
</dbReference>
<dbReference type="GO" id="GO:0005886">
    <property type="term" value="C:plasma membrane"/>
    <property type="evidence" value="ECO:0007669"/>
    <property type="project" value="UniProtKB-SubCell"/>
</dbReference>
<dbReference type="GO" id="GO:0003725">
    <property type="term" value="F:double-stranded RNA binding"/>
    <property type="evidence" value="ECO:0007669"/>
    <property type="project" value="InterPro"/>
</dbReference>
<dbReference type="GO" id="GO:0061710">
    <property type="term" value="F:L-threonylcarbamoyladenylate synthase"/>
    <property type="evidence" value="ECO:0000250"/>
    <property type="project" value="UniProtKB"/>
</dbReference>
<dbReference type="GO" id="GO:0016779">
    <property type="term" value="F:nucleotidyltransferase activity"/>
    <property type="evidence" value="ECO:0000318"/>
    <property type="project" value="GO_Central"/>
</dbReference>
<dbReference type="GO" id="GO:0000049">
    <property type="term" value="F:tRNA binding"/>
    <property type="evidence" value="ECO:0000318"/>
    <property type="project" value="GO_Central"/>
</dbReference>
<dbReference type="GO" id="GO:0051051">
    <property type="term" value="P:negative regulation of transport"/>
    <property type="evidence" value="ECO:0007669"/>
    <property type="project" value="Ensembl"/>
</dbReference>
<dbReference type="GO" id="GO:0006450">
    <property type="term" value="P:regulation of translational fidelity"/>
    <property type="evidence" value="ECO:0000318"/>
    <property type="project" value="GO_Central"/>
</dbReference>
<dbReference type="GO" id="GO:0002949">
    <property type="term" value="P:tRNA threonylcarbamoyladenosine modification"/>
    <property type="evidence" value="ECO:0000250"/>
    <property type="project" value="UniProtKB"/>
</dbReference>
<dbReference type="FunFam" id="3.90.870.10:FF:000007">
    <property type="entry name" value="YrdC N6-threonylcarbamoyltransferase domain containing"/>
    <property type="match status" value="1"/>
</dbReference>
<dbReference type="Gene3D" id="3.90.870.10">
    <property type="entry name" value="DHBP synthase"/>
    <property type="match status" value="1"/>
</dbReference>
<dbReference type="InterPro" id="IPR017945">
    <property type="entry name" value="DHBP_synth_RibB-like_a/b_dom"/>
</dbReference>
<dbReference type="InterPro" id="IPR006070">
    <property type="entry name" value="Sua5-like_dom"/>
</dbReference>
<dbReference type="InterPro" id="IPR050156">
    <property type="entry name" value="TC-AMP_synthase_SUA5"/>
</dbReference>
<dbReference type="NCBIfam" id="TIGR00057">
    <property type="entry name" value="L-threonylcarbamoyladenylate synthase"/>
    <property type="match status" value="1"/>
</dbReference>
<dbReference type="PANTHER" id="PTHR17490">
    <property type="entry name" value="SUA5"/>
    <property type="match status" value="1"/>
</dbReference>
<dbReference type="PANTHER" id="PTHR17490:SF10">
    <property type="entry name" value="THREONYLCARBAMOYL-AMP SYNTHASE"/>
    <property type="match status" value="1"/>
</dbReference>
<dbReference type="Pfam" id="PF01300">
    <property type="entry name" value="Sua5_yciO_yrdC"/>
    <property type="match status" value="1"/>
</dbReference>
<dbReference type="SUPFAM" id="SSF55821">
    <property type="entry name" value="YrdC/RibB"/>
    <property type="match status" value="1"/>
</dbReference>
<dbReference type="PROSITE" id="PS51163">
    <property type="entry name" value="YRDC"/>
    <property type="match status" value="1"/>
</dbReference>
<gene>
    <name type="primary">YRDC</name>
</gene>
<organism>
    <name type="scientific">Bos taurus</name>
    <name type="common">Bovine</name>
    <dbReference type="NCBI Taxonomy" id="9913"/>
    <lineage>
        <taxon>Eukaryota</taxon>
        <taxon>Metazoa</taxon>
        <taxon>Chordata</taxon>
        <taxon>Craniata</taxon>
        <taxon>Vertebrata</taxon>
        <taxon>Euteleostomi</taxon>
        <taxon>Mammalia</taxon>
        <taxon>Eutheria</taxon>
        <taxon>Laurasiatheria</taxon>
        <taxon>Artiodactyla</taxon>
        <taxon>Ruminantia</taxon>
        <taxon>Pecora</taxon>
        <taxon>Bovidae</taxon>
        <taxon>Bovinae</taxon>
        <taxon>Bos</taxon>
    </lineage>
</organism>
<feature type="transit peptide" description="Mitochondrion" evidence="3">
    <location>
        <begin position="1"/>
        <end position="53"/>
    </location>
</feature>
<feature type="chain" id="PRO_0000341401" description="Threonylcarbamoyl-AMP synthase">
    <location>
        <begin position="54"/>
        <end position="276"/>
    </location>
</feature>
<feature type="domain" description="YrdC-like" evidence="4">
    <location>
        <begin position="65"/>
        <end position="255"/>
    </location>
</feature>
<feature type="region of interest" description="Disordered" evidence="5">
    <location>
        <begin position="22"/>
        <end position="60"/>
    </location>
</feature>
<protein>
    <recommendedName>
        <fullName evidence="6">Threonylcarbamoyl-AMP synthase</fullName>
        <ecNumber evidence="2">2.7.7.87</ecNumber>
    </recommendedName>
</protein>
<proteinExistence type="evidence at transcript level"/>
<keyword id="KW-1003">Cell membrane</keyword>
<keyword id="KW-0963">Cytoplasm</keyword>
<keyword id="KW-0472">Membrane</keyword>
<keyword id="KW-0496">Mitochondrion</keyword>
<keyword id="KW-1185">Reference proteome</keyword>
<keyword id="KW-0808">Transferase</keyword>
<keyword id="KW-0809">Transit peptide</keyword>
<name>YRDC_BOVIN</name>
<accession>Q0VC80</accession>
<comment type="function">
    <text evidence="1 2">Cytoplasmic and mitochondrial threonylcarbamoyl-AMP synthase required for the formation of a threonylcarbamoyl group on adenosine at position 37 (t(6)A37) in tRNAs that read codons beginning with adenine. Catalyzes the conversion of L-threonine, HCO(3)(-)/CO(2) and ATP to give threonylcarbamoyl-AMP (TC-AMP) as the acyladenylate intermediate, with the release of diphosphate. Participates in t(6)A37 formation in cytoplasmic and mitochondrial tRNAs (By similarity). May regulate the activity of some transporters (By similarity).</text>
</comment>
<comment type="catalytic activity">
    <reaction evidence="2">
        <text>L-threonine + hydrogencarbonate + ATP = L-threonylcarbamoyladenylate + diphosphate + H2O</text>
        <dbReference type="Rhea" id="RHEA:36407"/>
        <dbReference type="ChEBI" id="CHEBI:15377"/>
        <dbReference type="ChEBI" id="CHEBI:17544"/>
        <dbReference type="ChEBI" id="CHEBI:30616"/>
        <dbReference type="ChEBI" id="CHEBI:33019"/>
        <dbReference type="ChEBI" id="CHEBI:57926"/>
        <dbReference type="ChEBI" id="CHEBI:73682"/>
        <dbReference type="EC" id="2.7.7.87"/>
    </reaction>
</comment>
<comment type="subunit">
    <text evidence="1">Interacts with RSC1A1.</text>
</comment>
<comment type="subcellular location">
    <subcellularLocation>
        <location evidence="2">Cytoplasm</location>
    </subcellularLocation>
    <subcellularLocation>
        <location evidence="2">Mitochondrion</location>
    </subcellularLocation>
    <subcellularLocation>
        <location evidence="1">Cell membrane</location>
        <topology evidence="1">Peripheral membrane protein</topology>
    </subcellularLocation>
    <text evidence="2">A large fraction localizes in the cytoplasm, whereas a smaller fraction is imported to mitochondria.</text>
</comment>
<comment type="domain">
    <text evidence="2">The mitochondrial targeting sequence (MTS) is weak and only mediates import of a small fraction of YRDC in mitochondria.</text>
</comment>
<comment type="similarity">
    <text evidence="6">Belongs to the SUA5 family.</text>
</comment>
<reference key="1">
    <citation type="submission" date="2006-08" db="EMBL/GenBank/DDBJ databases">
        <authorList>
            <consortium name="NIH - Mammalian Gene Collection (MGC) project"/>
        </authorList>
    </citation>
    <scope>NUCLEOTIDE SEQUENCE [LARGE SCALE MRNA]</scope>
    <source>
        <strain>Hereford</strain>
        <tissue>Hippocampus</tissue>
    </source>
</reference>
<evidence type="ECO:0000250" key="1">
    <source>
        <dbReference type="UniProtKB" id="Q3U5F4"/>
    </source>
</evidence>
<evidence type="ECO:0000250" key="2">
    <source>
        <dbReference type="UniProtKB" id="Q86U90"/>
    </source>
</evidence>
<evidence type="ECO:0000255" key="3"/>
<evidence type="ECO:0000255" key="4">
    <source>
        <dbReference type="PROSITE-ProRule" id="PRU00518"/>
    </source>
</evidence>
<evidence type="ECO:0000256" key="5">
    <source>
        <dbReference type="SAM" id="MobiDB-lite"/>
    </source>
</evidence>
<evidence type="ECO:0000305" key="6"/>
<sequence>MSPARPCRGLRAVVAASMGLSEGPAGSARSGRLLRSPSPTPGARLLRLPGSGAGRAANPERGGWTEALRAAVAELRAGAVVAVPTDTLYGLACSASCSEALGAVYRVKGRSETKPLAVCLGRVADVYRYCHVRVPEGLLKDLLPGPVTLVMERSEELNKDLNPFTPLVGIRIPDHAFMQDLAQMFGGPLALTSANLSSQSSSLNVEEFQDLWPHLSLIIDGGPIGDGQSPECRLGSTVVDLSVPGKFGIIRPGCALESTSAILQEYGLLPSHGSCW</sequence>